<gene>
    <name evidence="1" type="primary">gltX</name>
    <name type="ordered locus">YPTB2707</name>
</gene>
<dbReference type="EC" id="6.1.1.17" evidence="1"/>
<dbReference type="EMBL" id="BX936398">
    <property type="protein sequence ID" value="CAH21945.1"/>
    <property type="molecule type" value="Genomic_DNA"/>
</dbReference>
<dbReference type="RefSeq" id="WP_011192732.1">
    <property type="nucleotide sequence ID" value="NC_006155.1"/>
</dbReference>
<dbReference type="SMR" id="Q668N0"/>
<dbReference type="GeneID" id="49785282"/>
<dbReference type="KEGG" id="ypo:BZ17_3926"/>
<dbReference type="KEGG" id="yps:YPTB2707"/>
<dbReference type="PATRIC" id="fig|273123.14.peg.4124"/>
<dbReference type="Proteomes" id="UP000001011">
    <property type="component" value="Chromosome"/>
</dbReference>
<dbReference type="GO" id="GO:0005829">
    <property type="term" value="C:cytosol"/>
    <property type="evidence" value="ECO:0007669"/>
    <property type="project" value="TreeGrafter"/>
</dbReference>
<dbReference type="GO" id="GO:0005524">
    <property type="term" value="F:ATP binding"/>
    <property type="evidence" value="ECO:0007669"/>
    <property type="project" value="UniProtKB-UniRule"/>
</dbReference>
<dbReference type="GO" id="GO:0004818">
    <property type="term" value="F:glutamate-tRNA ligase activity"/>
    <property type="evidence" value="ECO:0007669"/>
    <property type="project" value="UniProtKB-UniRule"/>
</dbReference>
<dbReference type="GO" id="GO:0000049">
    <property type="term" value="F:tRNA binding"/>
    <property type="evidence" value="ECO:0007669"/>
    <property type="project" value="InterPro"/>
</dbReference>
<dbReference type="GO" id="GO:0008270">
    <property type="term" value="F:zinc ion binding"/>
    <property type="evidence" value="ECO:0007669"/>
    <property type="project" value="UniProtKB-UniRule"/>
</dbReference>
<dbReference type="GO" id="GO:0006424">
    <property type="term" value="P:glutamyl-tRNA aminoacylation"/>
    <property type="evidence" value="ECO:0007669"/>
    <property type="project" value="UniProtKB-UniRule"/>
</dbReference>
<dbReference type="CDD" id="cd00808">
    <property type="entry name" value="GluRS_core"/>
    <property type="match status" value="1"/>
</dbReference>
<dbReference type="FunFam" id="1.10.10.350:FF:000001">
    <property type="entry name" value="Glutamate--tRNA ligase"/>
    <property type="match status" value="1"/>
</dbReference>
<dbReference type="FunFam" id="3.40.50.620:FF:000007">
    <property type="entry name" value="Glutamate--tRNA ligase"/>
    <property type="match status" value="1"/>
</dbReference>
<dbReference type="Gene3D" id="1.10.10.350">
    <property type="match status" value="1"/>
</dbReference>
<dbReference type="Gene3D" id="3.40.50.620">
    <property type="entry name" value="HUPs"/>
    <property type="match status" value="1"/>
</dbReference>
<dbReference type="HAMAP" id="MF_00022">
    <property type="entry name" value="Glu_tRNA_synth_type1"/>
    <property type="match status" value="1"/>
</dbReference>
<dbReference type="InterPro" id="IPR045462">
    <property type="entry name" value="aa-tRNA-synth_I_cd-bd"/>
</dbReference>
<dbReference type="InterPro" id="IPR020751">
    <property type="entry name" value="aa-tRNA-synth_I_codon-bd_sub2"/>
</dbReference>
<dbReference type="InterPro" id="IPR001412">
    <property type="entry name" value="aa-tRNA-synth_I_CS"/>
</dbReference>
<dbReference type="InterPro" id="IPR008925">
    <property type="entry name" value="aa_tRNA-synth_I_cd-bd_sf"/>
</dbReference>
<dbReference type="InterPro" id="IPR004527">
    <property type="entry name" value="Glu-tRNA-ligase_bac/mito"/>
</dbReference>
<dbReference type="InterPro" id="IPR000924">
    <property type="entry name" value="Glu/Gln-tRNA-synth"/>
</dbReference>
<dbReference type="InterPro" id="IPR020058">
    <property type="entry name" value="Glu/Gln-tRNA-synth_Ib_cat-dom"/>
</dbReference>
<dbReference type="InterPro" id="IPR049940">
    <property type="entry name" value="GluQ/Sye"/>
</dbReference>
<dbReference type="InterPro" id="IPR033910">
    <property type="entry name" value="GluRS_core"/>
</dbReference>
<dbReference type="InterPro" id="IPR014729">
    <property type="entry name" value="Rossmann-like_a/b/a_fold"/>
</dbReference>
<dbReference type="NCBIfam" id="TIGR00464">
    <property type="entry name" value="gltX_bact"/>
    <property type="match status" value="1"/>
</dbReference>
<dbReference type="PANTHER" id="PTHR43311">
    <property type="entry name" value="GLUTAMATE--TRNA LIGASE"/>
    <property type="match status" value="1"/>
</dbReference>
<dbReference type="PANTHER" id="PTHR43311:SF2">
    <property type="entry name" value="GLUTAMATE--TRNA LIGASE, MITOCHONDRIAL-RELATED"/>
    <property type="match status" value="1"/>
</dbReference>
<dbReference type="Pfam" id="PF19269">
    <property type="entry name" value="Anticodon_2"/>
    <property type="match status" value="1"/>
</dbReference>
<dbReference type="Pfam" id="PF00749">
    <property type="entry name" value="tRNA-synt_1c"/>
    <property type="match status" value="1"/>
</dbReference>
<dbReference type="PRINTS" id="PR00987">
    <property type="entry name" value="TRNASYNTHGLU"/>
</dbReference>
<dbReference type="SUPFAM" id="SSF48163">
    <property type="entry name" value="An anticodon-binding domain of class I aminoacyl-tRNA synthetases"/>
    <property type="match status" value="1"/>
</dbReference>
<dbReference type="SUPFAM" id="SSF52374">
    <property type="entry name" value="Nucleotidylyl transferase"/>
    <property type="match status" value="1"/>
</dbReference>
<dbReference type="PROSITE" id="PS00178">
    <property type="entry name" value="AA_TRNA_LIGASE_I"/>
    <property type="match status" value="1"/>
</dbReference>
<organism>
    <name type="scientific">Yersinia pseudotuberculosis serotype I (strain IP32953)</name>
    <dbReference type="NCBI Taxonomy" id="273123"/>
    <lineage>
        <taxon>Bacteria</taxon>
        <taxon>Pseudomonadati</taxon>
        <taxon>Pseudomonadota</taxon>
        <taxon>Gammaproteobacteria</taxon>
        <taxon>Enterobacterales</taxon>
        <taxon>Yersiniaceae</taxon>
        <taxon>Yersinia</taxon>
    </lineage>
</organism>
<reference key="1">
    <citation type="journal article" date="2004" name="Proc. Natl. Acad. Sci. U.S.A.">
        <title>Insights into the evolution of Yersinia pestis through whole-genome comparison with Yersinia pseudotuberculosis.</title>
        <authorList>
            <person name="Chain P.S.G."/>
            <person name="Carniel E."/>
            <person name="Larimer F.W."/>
            <person name="Lamerdin J."/>
            <person name="Stoutland P.O."/>
            <person name="Regala W.M."/>
            <person name="Georgescu A.M."/>
            <person name="Vergez L.M."/>
            <person name="Land M.L."/>
            <person name="Motin V.L."/>
            <person name="Brubaker R.R."/>
            <person name="Fowler J."/>
            <person name="Hinnebusch J."/>
            <person name="Marceau M."/>
            <person name="Medigue C."/>
            <person name="Simonet M."/>
            <person name="Chenal-Francisque V."/>
            <person name="Souza B."/>
            <person name="Dacheux D."/>
            <person name="Elliott J.M."/>
            <person name="Derbise A."/>
            <person name="Hauser L.J."/>
            <person name="Garcia E."/>
        </authorList>
    </citation>
    <scope>NUCLEOTIDE SEQUENCE [LARGE SCALE GENOMIC DNA]</scope>
    <source>
        <strain>IP32953</strain>
    </source>
</reference>
<evidence type="ECO:0000255" key="1">
    <source>
        <dbReference type="HAMAP-Rule" id="MF_00022"/>
    </source>
</evidence>
<proteinExistence type="inferred from homology"/>
<sequence length="471" mass="53182">MKIKTRFAPSPTGYLHVGGARTALYSWLFSRHLGGEFVLRIEDTDLERSTQEAIDAIMDGMNWLNLDWDEGPYFQTKRFDRYNAVIDQMLDAGTAYRCYCSKERLEALREAQMANGEKPRYDGHCRDSQCTHGADEPSVVRFRNPQEGSVIFDDKIRGPIEFSNQELDDLIIRRTDGSPTYNFCVVIDDWDMEITHVIRGEDHINNTPRQINILKALGAPVPEYAHVSMILGDDGKKLSKRHGAVGVMQYRDDGYLPEALLNYLVRLGWSHGDQEIFSIEEMTQLFTLDAVSKSASAFNTEKLQWLNHHYINSLPPEQVAVHLSWHVEQLGIDTRNGPELVEIVKLLGERCKTLKEMAESCRYFYEEFDAFDVDAAKKHLRPIARQPLEAVKVKLAAITEWTTENVHNAIQGTADELGVGMGKVGMPLRVAVTGVGQSPGMDVTVHAIGQARTLARIDKALAFISEREAQQ</sequence>
<feature type="chain" id="PRO_0000119709" description="Glutamate--tRNA ligase">
    <location>
        <begin position="1"/>
        <end position="471"/>
    </location>
</feature>
<feature type="short sequence motif" description="'HIGH' region" evidence="1">
    <location>
        <begin position="9"/>
        <end position="19"/>
    </location>
</feature>
<feature type="short sequence motif" description="'KMSKS' region" evidence="1">
    <location>
        <begin position="237"/>
        <end position="241"/>
    </location>
</feature>
<feature type="binding site" evidence="1">
    <location>
        <position position="98"/>
    </location>
    <ligand>
        <name>Zn(2+)</name>
        <dbReference type="ChEBI" id="CHEBI:29105"/>
    </ligand>
</feature>
<feature type="binding site" evidence="1">
    <location>
        <position position="100"/>
    </location>
    <ligand>
        <name>Zn(2+)</name>
        <dbReference type="ChEBI" id="CHEBI:29105"/>
    </ligand>
</feature>
<feature type="binding site" evidence="1">
    <location>
        <position position="125"/>
    </location>
    <ligand>
        <name>Zn(2+)</name>
        <dbReference type="ChEBI" id="CHEBI:29105"/>
    </ligand>
</feature>
<feature type="binding site" evidence="1">
    <location>
        <position position="127"/>
    </location>
    <ligand>
        <name>Zn(2+)</name>
        <dbReference type="ChEBI" id="CHEBI:29105"/>
    </ligand>
</feature>
<feature type="binding site" evidence="1">
    <location>
        <position position="240"/>
    </location>
    <ligand>
        <name>ATP</name>
        <dbReference type="ChEBI" id="CHEBI:30616"/>
    </ligand>
</feature>
<protein>
    <recommendedName>
        <fullName evidence="1">Glutamate--tRNA ligase</fullName>
        <ecNumber evidence="1">6.1.1.17</ecNumber>
    </recommendedName>
    <alternativeName>
        <fullName evidence="1">Glutamyl-tRNA synthetase</fullName>
        <shortName evidence="1">GluRS</shortName>
    </alternativeName>
</protein>
<keyword id="KW-0030">Aminoacyl-tRNA synthetase</keyword>
<keyword id="KW-0067">ATP-binding</keyword>
<keyword id="KW-0963">Cytoplasm</keyword>
<keyword id="KW-0436">Ligase</keyword>
<keyword id="KW-0479">Metal-binding</keyword>
<keyword id="KW-0547">Nucleotide-binding</keyword>
<keyword id="KW-0648">Protein biosynthesis</keyword>
<keyword id="KW-0862">Zinc</keyword>
<comment type="function">
    <text evidence="1">Catalyzes the attachment of glutamate to tRNA(Glu) in a two-step reaction: glutamate is first activated by ATP to form Glu-AMP and then transferred to the acceptor end of tRNA(Glu).</text>
</comment>
<comment type="catalytic activity">
    <reaction evidence="1">
        <text>tRNA(Glu) + L-glutamate + ATP = L-glutamyl-tRNA(Glu) + AMP + diphosphate</text>
        <dbReference type="Rhea" id="RHEA:23540"/>
        <dbReference type="Rhea" id="RHEA-COMP:9663"/>
        <dbReference type="Rhea" id="RHEA-COMP:9680"/>
        <dbReference type="ChEBI" id="CHEBI:29985"/>
        <dbReference type="ChEBI" id="CHEBI:30616"/>
        <dbReference type="ChEBI" id="CHEBI:33019"/>
        <dbReference type="ChEBI" id="CHEBI:78442"/>
        <dbReference type="ChEBI" id="CHEBI:78520"/>
        <dbReference type="ChEBI" id="CHEBI:456215"/>
        <dbReference type="EC" id="6.1.1.17"/>
    </reaction>
</comment>
<comment type="cofactor">
    <cofactor evidence="1">
        <name>Zn(2+)</name>
        <dbReference type="ChEBI" id="CHEBI:29105"/>
    </cofactor>
    <text evidence="1">Binds 1 zinc ion per subunit.</text>
</comment>
<comment type="subunit">
    <text evidence="1">Monomer.</text>
</comment>
<comment type="subcellular location">
    <subcellularLocation>
        <location evidence="1">Cytoplasm</location>
    </subcellularLocation>
</comment>
<comment type="similarity">
    <text evidence="1">Belongs to the class-I aminoacyl-tRNA synthetase family. Glutamate--tRNA ligase type 1 subfamily.</text>
</comment>
<name>SYE_YERPS</name>
<accession>Q668N0</accession>